<organism>
    <name type="scientific">Oryza sativa subsp. japonica</name>
    <name type="common">Rice</name>
    <dbReference type="NCBI Taxonomy" id="39947"/>
    <lineage>
        <taxon>Eukaryota</taxon>
        <taxon>Viridiplantae</taxon>
        <taxon>Streptophyta</taxon>
        <taxon>Embryophyta</taxon>
        <taxon>Tracheophyta</taxon>
        <taxon>Spermatophyta</taxon>
        <taxon>Magnoliopsida</taxon>
        <taxon>Liliopsida</taxon>
        <taxon>Poales</taxon>
        <taxon>Poaceae</taxon>
        <taxon>BOP clade</taxon>
        <taxon>Oryzoideae</taxon>
        <taxon>Oryzeae</taxon>
        <taxon>Oryzinae</taxon>
        <taxon>Oryza</taxon>
        <taxon>Oryza sativa</taxon>
    </lineage>
</organism>
<accession>Q10MN3</accession>
<accession>C7J0P2</accession>
<feature type="chain" id="PRO_0000330301" description="Peroxisomal membrane protein 11-2">
    <location>
        <begin position="1"/>
        <end position="254"/>
    </location>
</feature>
<feature type="topological domain" description="Cytoplasmic" evidence="2">
    <location>
        <begin position="1"/>
        <end position="113"/>
    </location>
</feature>
<feature type="transmembrane region" description="Helical" evidence="2">
    <location>
        <begin position="114"/>
        <end position="134"/>
    </location>
</feature>
<feature type="topological domain" description="Lumenal" evidence="2">
    <location>
        <begin position="135"/>
        <end position="227"/>
    </location>
</feature>
<feature type="transmembrane region" description="Helical" evidence="2">
    <location>
        <begin position="228"/>
        <end position="247"/>
    </location>
</feature>
<feature type="topological domain" description="Cytoplasmic" evidence="2">
    <location>
        <begin position="248"/>
        <end position="254"/>
    </location>
</feature>
<gene>
    <name type="primary">PEX11-2</name>
    <name type="ordered locus">Os03g0301950</name>
    <name type="ordered locus">LOC_Os03g19000</name>
</gene>
<name>PX112_ORYSJ</name>
<keyword id="KW-0472">Membrane</keyword>
<keyword id="KW-0576">Peroxisome</keyword>
<keyword id="KW-0962">Peroxisome biogenesis</keyword>
<keyword id="KW-1185">Reference proteome</keyword>
<keyword id="KW-0812">Transmembrane</keyword>
<keyword id="KW-1133">Transmembrane helix</keyword>
<proteinExistence type="evidence at transcript level"/>
<comment type="function">
    <text evidence="1">Involved in peroxisomal proliferation.</text>
</comment>
<comment type="subcellular location">
    <subcellularLocation>
        <location evidence="1">Peroxisome membrane</location>
        <topology evidence="1">Multi-pass membrane protein</topology>
    </subcellularLocation>
</comment>
<comment type="developmental stage">
    <text evidence="3">Expressed in endosperm 14 and 21 days after pollination.</text>
</comment>
<comment type="similarity">
    <text evidence="4">Belongs to the peroxin-11 family.</text>
</comment>
<evidence type="ECO:0000250" key="1"/>
<evidence type="ECO:0000255" key="2"/>
<evidence type="ECO:0000269" key="3">
    <source>
    </source>
</evidence>
<evidence type="ECO:0000305" key="4"/>
<sequence length="254" mass="27364">MVTAAGSPSSSSARKPASRPRLPCRDILVHIEAYLSRRDGVDNLLKVSLYAARLALALAAGQPPLPHAATARLRSFESSVGLSRKAFRLGKFVQSINALRAAAYHPHPHVHPLLVLLAYGGQGVYNFLEQFAWLAKAGLLPARLLPRRLHRIGVWAQLLAHVGSIAIKLEEVAELECGVEARLEEGCGEESEVVRTLSRKLLLKLMSLVQDMVDSAMTVGDVTGRKGLLGSSTLMASAGLLSALISVHKNWNSC</sequence>
<reference key="1">
    <citation type="journal article" date="2005" name="Genome Res.">
        <title>Sequence, annotation, and analysis of synteny between rice chromosome 3 and diverged grass species.</title>
        <authorList>
            <consortium name="The rice chromosome 3 sequencing consortium"/>
            <person name="Buell C.R."/>
            <person name="Yuan Q."/>
            <person name="Ouyang S."/>
            <person name="Liu J."/>
            <person name="Zhu W."/>
            <person name="Wang A."/>
            <person name="Maiti R."/>
            <person name="Haas B."/>
            <person name="Wortman J."/>
            <person name="Pertea M."/>
            <person name="Jones K.M."/>
            <person name="Kim M."/>
            <person name="Overton L."/>
            <person name="Tsitrin T."/>
            <person name="Fadrosh D."/>
            <person name="Bera J."/>
            <person name="Weaver B."/>
            <person name="Jin S."/>
            <person name="Johri S."/>
            <person name="Reardon M."/>
            <person name="Webb K."/>
            <person name="Hill J."/>
            <person name="Moffat K."/>
            <person name="Tallon L."/>
            <person name="Van Aken S."/>
            <person name="Lewis M."/>
            <person name="Utterback T."/>
            <person name="Feldblyum T."/>
            <person name="Zismann V."/>
            <person name="Iobst S."/>
            <person name="Hsiao J."/>
            <person name="de Vazeille A.R."/>
            <person name="Salzberg S.L."/>
            <person name="White O."/>
            <person name="Fraser C.M."/>
            <person name="Yu Y."/>
            <person name="Kim H."/>
            <person name="Rambo T."/>
            <person name="Currie J."/>
            <person name="Collura K."/>
            <person name="Kernodle-Thompson S."/>
            <person name="Wei F."/>
            <person name="Kudrna K."/>
            <person name="Ammiraju J.S.S."/>
            <person name="Luo M."/>
            <person name="Goicoechea J.L."/>
            <person name="Wing R.A."/>
            <person name="Henry D."/>
            <person name="Oates R."/>
            <person name="Palmer M."/>
            <person name="Pries G."/>
            <person name="Saski C."/>
            <person name="Simmons J."/>
            <person name="Soderlund C."/>
            <person name="Nelson W."/>
            <person name="de la Bastide M."/>
            <person name="Spiegel L."/>
            <person name="Nascimento L."/>
            <person name="Huang E."/>
            <person name="Preston R."/>
            <person name="Zutavern T."/>
            <person name="Palmer L."/>
            <person name="O'Shaughnessy A."/>
            <person name="Dike S."/>
            <person name="McCombie W.R."/>
            <person name="Minx P."/>
            <person name="Cordum H."/>
            <person name="Wilson R."/>
            <person name="Jin W."/>
            <person name="Lee H.R."/>
            <person name="Jiang J."/>
            <person name="Jackson S."/>
        </authorList>
    </citation>
    <scope>NUCLEOTIDE SEQUENCE [LARGE SCALE GENOMIC DNA]</scope>
    <source>
        <strain>cv. Nipponbare</strain>
    </source>
</reference>
<reference key="2">
    <citation type="journal article" date="2005" name="Nature">
        <title>The map-based sequence of the rice genome.</title>
        <authorList>
            <consortium name="International rice genome sequencing project (IRGSP)"/>
        </authorList>
    </citation>
    <scope>NUCLEOTIDE SEQUENCE [LARGE SCALE GENOMIC DNA]</scope>
    <source>
        <strain>cv. Nipponbare</strain>
    </source>
</reference>
<reference key="3">
    <citation type="journal article" date="2008" name="Nucleic Acids Res.">
        <title>The rice annotation project database (RAP-DB): 2008 update.</title>
        <authorList>
            <consortium name="The rice annotation project (RAP)"/>
        </authorList>
    </citation>
    <scope>GENOME REANNOTATION</scope>
    <source>
        <strain>cv. Nipponbare</strain>
    </source>
</reference>
<reference key="4">
    <citation type="journal article" date="2013" name="Rice">
        <title>Improvement of the Oryza sativa Nipponbare reference genome using next generation sequence and optical map data.</title>
        <authorList>
            <person name="Kawahara Y."/>
            <person name="de la Bastide M."/>
            <person name="Hamilton J.P."/>
            <person name="Kanamori H."/>
            <person name="McCombie W.R."/>
            <person name="Ouyang S."/>
            <person name="Schwartz D.C."/>
            <person name="Tanaka T."/>
            <person name="Wu J."/>
            <person name="Zhou S."/>
            <person name="Childs K.L."/>
            <person name="Davidson R.M."/>
            <person name="Lin H."/>
            <person name="Quesada-Ocampo L."/>
            <person name="Vaillancourt B."/>
            <person name="Sakai H."/>
            <person name="Lee S.S."/>
            <person name="Kim J."/>
            <person name="Numa H."/>
            <person name="Itoh T."/>
            <person name="Buell C.R."/>
            <person name="Matsumoto T."/>
        </authorList>
    </citation>
    <scope>GENOME REANNOTATION</scope>
    <source>
        <strain>cv. Nipponbare</strain>
    </source>
</reference>
<reference key="5">
    <citation type="journal article" date="2008" name="Gene">
        <title>Comprehensive sequence and expression profile analysis of PEX11 gene family in rice.</title>
        <authorList>
            <person name="Nayidu N.K."/>
            <person name="Wang L."/>
            <person name="Xie W."/>
            <person name="Zhang C."/>
            <person name="Fan C."/>
            <person name="Lian X."/>
            <person name="Zhang Q."/>
            <person name="Xiong L."/>
        </authorList>
    </citation>
    <scope>DEVELOPMENTAL STAGE</scope>
    <scope>GENE FAMILY</scope>
    <scope>NOMENCLATURE</scope>
</reference>
<dbReference type="EMBL" id="DP000009">
    <property type="protein sequence ID" value="ABF95492.1"/>
    <property type="molecule type" value="Genomic_DNA"/>
</dbReference>
<dbReference type="EMBL" id="AP008209">
    <property type="protein sequence ID" value="BAH92115.1"/>
    <property type="molecule type" value="Genomic_DNA"/>
</dbReference>
<dbReference type="EMBL" id="AP014959">
    <property type="protein sequence ID" value="BAS83778.1"/>
    <property type="molecule type" value="Genomic_DNA"/>
</dbReference>
<dbReference type="RefSeq" id="XP_015630854.1">
    <property type="nucleotide sequence ID" value="XM_015775368.1"/>
</dbReference>
<dbReference type="SMR" id="Q10MN3"/>
<dbReference type="FunCoup" id="Q10MN3">
    <property type="interactions" value="161"/>
</dbReference>
<dbReference type="STRING" id="39947.Q10MN3"/>
<dbReference type="PaxDb" id="39947-Q10MN3"/>
<dbReference type="EnsemblPlants" id="Os03t0301950-01">
    <property type="protein sequence ID" value="Os03t0301950-01"/>
    <property type="gene ID" value="Os03g0301950"/>
</dbReference>
<dbReference type="Gramene" id="Os03t0301950-01">
    <property type="protein sequence ID" value="Os03t0301950-01"/>
    <property type="gene ID" value="Os03g0301950"/>
</dbReference>
<dbReference type="KEGG" id="dosa:Os03g0301950"/>
<dbReference type="eggNOG" id="KOG4186">
    <property type="taxonomic scope" value="Eukaryota"/>
</dbReference>
<dbReference type="HOGENOM" id="CLU_080291_0_0_1"/>
<dbReference type="InParanoid" id="Q10MN3"/>
<dbReference type="OMA" id="HRIGVWA"/>
<dbReference type="OrthoDB" id="411017at2759"/>
<dbReference type="Proteomes" id="UP000000763">
    <property type="component" value="Chromosome 3"/>
</dbReference>
<dbReference type="Proteomes" id="UP000059680">
    <property type="component" value="Chromosome 3"/>
</dbReference>
<dbReference type="GO" id="GO:0005778">
    <property type="term" value="C:peroxisomal membrane"/>
    <property type="evidence" value="ECO:0000318"/>
    <property type="project" value="GO_Central"/>
</dbReference>
<dbReference type="GO" id="GO:0042802">
    <property type="term" value="F:identical protein binding"/>
    <property type="evidence" value="ECO:0007669"/>
    <property type="project" value="UniProtKB-ARBA"/>
</dbReference>
<dbReference type="GO" id="GO:0016559">
    <property type="term" value="P:peroxisome fission"/>
    <property type="evidence" value="ECO:0000318"/>
    <property type="project" value="GO_Central"/>
</dbReference>
<dbReference type="GO" id="GO:0044375">
    <property type="term" value="P:regulation of peroxisome size"/>
    <property type="evidence" value="ECO:0007669"/>
    <property type="project" value="UniProtKB-ARBA"/>
</dbReference>
<dbReference type="InterPro" id="IPR008733">
    <property type="entry name" value="PEX11"/>
</dbReference>
<dbReference type="PANTHER" id="PTHR12652:SF50">
    <property type="entry name" value="PEROXIN 11"/>
    <property type="match status" value="1"/>
</dbReference>
<dbReference type="PANTHER" id="PTHR12652">
    <property type="entry name" value="PEROXISOMAL BIOGENESIS FACTOR 11"/>
    <property type="match status" value="1"/>
</dbReference>
<dbReference type="Pfam" id="PF05648">
    <property type="entry name" value="PEX11"/>
    <property type="match status" value="1"/>
</dbReference>
<protein>
    <recommendedName>
        <fullName>Peroxisomal membrane protein 11-2</fullName>
    </recommendedName>
    <alternativeName>
        <fullName>OsPEX11-2</fullName>
    </alternativeName>
    <alternativeName>
        <fullName>OsPEX11-5</fullName>
    </alternativeName>
    <alternativeName>
        <fullName>Peroxin-11-2</fullName>
    </alternativeName>
</protein>